<gene>
    <name type="primary">34.1</name>
</gene>
<accession>O64228</accession>
<proteinExistence type="predicted"/>
<organismHost>
    <name type="scientific">Mycobacterium</name>
    <dbReference type="NCBI Taxonomy" id="1763"/>
</organismHost>
<dbReference type="EMBL" id="AF022214">
    <property type="protein sequence ID" value="AAC18475.1"/>
    <property type="molecule type" value="Genomic_DNA"/>
</dbReference>
<dbReference type="PIR" id="A72804">
    <property type="entry name" value="A72804"/>
</dbReference>
<dbReference type="RefSeq" id="NP_046851.1">
    <property type="nucleotide sequence ID" value="NC_001900.1"/>
</dbReference>
<dbReference type="GeneID" id="1261560"/>
<dbReference type="KEGG" id="vg:1261560"/>
<dbReference type="OrthoDB" id="18206at10239"/>
<dbReference type="Proteomes" id="UP000002131">
    <property type="component" value="Segment"/>
</dbReference>
<dbReference type="InterPro" id="IPR021235">
    <property type="entry name" value="DUF2637"/>
</dbReference>
<dbReference type="Pfam" id="PF10935">
    <property type="entry name" value="DUF2637"/>
    <property type="match status" value="1"/>
</dbReference>
<reference key="1">
    <citation type="journal article" date="1998" name="J. Mol. Biol.">
        <title>Genome structure of mycobacteriophage D29: implications for phage evolution.</title>
        <authorList>
            <person name="Ford M.E."/>
            <person name="Sarkis G.J."/>
            <person name="Belanger A.E."/>
            <person name="Hendrix R.W."/>
            <person name="Hatfull G.F."/>
        </authorList>
    </citation>
    <scope>NUCLEOTIDE SEQUENCE [LARGE SCALE GENOMIC DNA]</scope>
</reference>
<sequence>MKILSRDKVALKVATAGTVAVGGLAFSLSFTALSELSAANGVAQSWMVPLVIDGGILVATMATVALSRHGWYAWALLILSSLMSVAGNVAHAQPHGLIAMVIAAIPPLWLLASTHLTVLLYREAQESGSESISEPLLTRGFAEAA</sequence>
<feature type="chain" id="PRO_0000164837" description="Gene 34.1 protein">
    <location>
        <begin position="1"/>
        <end position="145"/>
    </location>
</feature>
<comment type="function">
    <text>Putative excisionase.</text>
</comment>
<protein>
    <recommendedName>
        <fullName>Gene 34.1 protein</fullName>
    </recommendedName>
    <alternativeName>
        <fullName>Gp34.1</fullName>
    </alternativeName>
</protein>
<keyword id="KW-1185">Reference proteome</keyword>
<organism>
    <name type="scientific">Mycobacterium phage D29</name>
    <name type="common">Mycobacteriophage D29</name>
    <dbReference type="NCBI Taxonomy" id="28369"/>
    <lineage>
        <taxon>Viruses</taxon>
        <taxon>Duplodnaviria</taxon>
        <taxon>Heunggongvirae</taxon>
        <taxon>Uroviricota</taxon>
        <taxon>Caudoviricetes</taxon>
        <taxon>Fromanvirus</taxon>
    </lineage>
</organism>
<name>VG341_BPMD2</name>